<protein>
    <recommendedName>
        <fullName evidence="3">Mytilin-2</fullName>
    </recommendedName>
    <alternativeName>
        <fullName evidence="3">Mytilus uncharacterized protein 2</fullName>
        <shortName evidence="3">MUSP-2</shortName>
    </alternativeName>
</protein>
<keyword id="KW-0903">Direct protein sequencing</keyword>
<keyword id="KW-0964">Secreted</keyword>
<keyword id="KW-0732">Signal</keyword>
<name>MYT2_MYTCA</name>
<feature type="signal peptide" evidence="1">
    <location>
        <begin position="1"/>
        <end position="24"/>
    </location>
</feature>
<feature type="chain" id="PRO_0000404090" description="Mytilin-2" evidence="1">
    <location>
        <begin position="25"/>
        <end position="341"/>
    </location>
</feature>
<comment type="subcellular location">
    <subcellularLocation>
        <location evidence="2">Secreted</location>
    </subcellularLocation>
</comment>
<comment type="tissue specificity">
    <text evidence="2">Component of the organic matrix of calcified shell layers like nacre and prisms.</text>
</comment>
<accession>P86858</accession>
<evidence type="ECO:0000255" key="1"/>
<evidence type="ECO:0000269" key="2">
    <source>
    </source>
</evidence>
<evidence type="ECO:0000303" key="3">
    <source>
    </source>
</evidence>
<evidence type="ECO:0000305" key="4"/>
<reference evidence="4" key="1">
    <citation type="submission" date="2008-12" db="EMBL/GenBank/DDBJ databases">
        <title>Expressed sequence tags from Mytilus californianus.</title>
        <authorList>
            <person name="Gracey A."/>
            <person name="Grimwood J."/>
            <person name="Schmutz J."/>
            <person name="Myers R.M."/>
        </authorList>
    </citation>
    <scope>NUCLEOTIDE SEQUENCE [MRNA]</scope>
</reference>
<reference evidence="4" key="2">
    <citation type="journal article" date="2011" name="J. Mol. Evol.">
        <title>Molecular evolution of mollusc shell proteins: insights from proteomic analysis of the edible mussel mytilus.</title>
        <authorList>
            <person name="Marie B."/>
            <person name="Le Roy N."/>
            <person name="Zanella-Cleon I."/>
            <person name="Becchi M."/>
            <person name="Marin F."/>
        </authorList>
    </citation>
    <scope>PROTEIN SEQUENCE OF 61-71; 138-145 AND 200-207</scope>
    <scope>SUBCELLULAR LOCATION</scope>
    <scope>TISSUE SPECIFICITY</scope>
    <source>
        <tissue evidence="2">Shell</tissue>
    </source>
</reference>
<organism>
    <name type="scientific">Mytilus californianus</name>
    <name type="common">California mussel</name>
    <dbReference type="NCBI Taxonomy" id="6549"/>
    <lineage>
        <taxon>Eukaryota</taxon>
        <taxon>Metazoa</taxon>
        <taxon>Spiralia</taxon>
        <taxon>Lophotrochozoa</taxon>
        <taxon>Mollusca</taxon>
        <taxon>Bivalvia</taxon>
        <taxon>Autobranchia</taxon>
        <taxon>Pteriomorphia</taxon>
        <taxon>Mytilida</taxon>
        <taxon>Mytiloidea</taxon>
        <taxon>Mytilidae</taxon>
        <taxon>Mytilinae</taxon>
        <taxon>Mytilus</taxon>
    </lineage>
</organism>
<proteinExistence type="evidence at protein level"/>
<dbReference type="EMBL" id="GE755963">
    <property type="status" value="NOT_ANNOTATED_CDS"/>
    <property type="molecule type" value="mRNA"/>
</dbReference>
<dbReference type="EMBL" id="GE750813">
    <property type="status" value="NOT_ANNOTATED_CDS"/>
    <property type="molecule type" value="mRNA"/>
</dbReference>
<dbReference type="RefSeq" id="XP_052094921.1">
    <property type="nucleotide sequence ID" value="XM_052238961.1"/>
</dbReference>
<dbReference type="EnsemblMetazoa" id="XM_052238961.1">
    <property type="protein sequence ID" value="XP_052094921.1"/>
    <property type="gene ID" value="LOC127730527"/>
</dbReference>
<dbReference type="GeneID" id="127730527"/>
<dbReference type="OrthoDB" id="6122963at2759"/>
<dbReference type="GO" id="GO:0005576">
    <property type="term" value="C:extracellular region"/>
    <property type="evidence" value="ECO:0007669"/>
    <property type="project" value="UniProtKB-SubCell"/>
</dbReference>
<sequence>MFKQSYQLCLVFLLFVCFYQSVKGNYGKRSKYQKHKGTIPYYSNRYHHARRQTALSRTGKSDSSPFQIILRAINRRPGPQINGRGKKSVTRTLGMLQSVLSQRRGLYNHRSQKSQNVFGVLQNLLKNVRMFKRNIGRLYVSDIVRRRIPTVNAQATARVNVQATAGVNSLTTAVNTDSQTRTLNTLRATGWFKEVSENRLIMQQVLRASLNGVIAGWIETLARRDLMEEFIDYPQAFAIITNTVLSSSQKQLILDLGGNDQLQELLENVPAFTLILNYVQTQDRVQMIVTISETGNMDKLISNLGVLNRFLSNAITPGQTAAIRNLAENGQLEQFIDNQRG</sequence>